<organism>
    <name type="scientific">Debaryomyces hansenii (strain ATCC 36239 / CBS 767 / BCRC 21394 / JCM 1990 / NBRC 0083 / IGC 2968)</name>
    <name type="common">Yeast</name>
    <name type="synonym">Torulaspora hansenii</name>
    <dbReference type="NCBI Taxonomy" id="284592"/>
    <lineage>
        <taxon>Eukaryota</taxon>
        <taxon>Fungi</taxon>
        <taxon>Dikarya</taxon>
        <taxon>Ascomycota</taxon>
        <taxon>Saccharomycotina</taxon>
        <taxon>Pichiomycetes</taxon>
        <taxon>Debaryomycetaceae</taxon>
        <taxon>Debaryomyces</taxon>
    </lineage>
</organism>
<comment type="function">
    <text evidence="1">Component of the cytochrome c oxidase, the last enzyme in the mitochondrial electron transport chain which drives oxidative phosphorylation. The respiratory chain contains 3 multisubunit complexes succinate dehydrogenase (complex II, CII), ubiquinol-cytochrome c oxidoreductase (cytochrome b-c1 complex, complex III, CIII) and cytochrome c oxidase (complex IV, CIV), that cooperate to transfer electrons derived from NADH and succinate to molecular oxygen, creating an electrochemical gradient over the inner membrane that drives transmembrane transport and the ATP synthase. Cytochrome c oxidase is the component of the respiratory chain that catalyzes the reduction of oxygen to water. Electrons originating from reduced cytochrome c in the intermembrane space (IMS) are transferred via the dinuclear copper A center (CU(A)) of subunit 2 and heme A of subunit 1 to the active site in subunit 1, a binuclear center (BNC) formed by heme A3 and copper B (CU(B)). The BNC reduces molecular oxygen to 2 water molecules using 4 electrons from cytochrome c in the IMS and 4 protons from the mitochondrial matrix.</text>
</comment>
<comment type="catalytic activity">
    <reaction evidence="1">
        <text>4 Fe(II)-[cytochrome c] + O2 + 8 H(+)(in) = 4 Fe(III)-[cytochrome c] + 2 H2O + 4 H(+)(out)</text>
        <dbReference type="Rhea" id="RHEA:11436"/>
        <dbReference type="Rhea" id="RHEA-COMP:10350"/>
        <dbReference type="Rhea" id="RHEA-COMP:14399"/>
        <dbReference type="ChEBI" id="CHEBI:15377"/>
        <dbReference type="ChEBI" id="CHEBI:15378"/>
        <dbReference type="ChEBI" id="CHEBI:15379"/>
        <dbReference type="ChEBI" id="CHEBI:29033"/>
        <dbReference type="ChEBI" id="CHEBI:29034"/>
        <dbReference type="EC" id="7.1.1.9"/>
    </reaction>
    <physiologicalReaction direction="left-to-right" evidence="1">
        <dbReference type="Rhea" id="RHEA:11437"/>
    </physiologicalReaction>
</comment>
<comment type="cofactor">
    <cofactor evidence="1">
        <name>Cu cation</name>
        <dbReference type="ChEBI" id="CHEBI:23378"/>
    </cofactor>
    <text evidence="1">Binds a dinuclear copper A center per subunit.</text>
</comment>
<comment type="subunit">
    <text evidence="1">Component of the cytochrome c oxidase (complex IV, CIV), a multisubunit enzyme composed of a catalytic core of 3 subunits and several supernumerary subunits. The complex exists as a monomer or a dimer and forms supercomplexes (SCs) in the inner mitochondrial membrane with ubiquinol-cytochrome c oxidoreductase (cytochrome b-c1 complex, complex III, CIII).</text>
</comment>
<comment type="subcellular location">
    <subcellularLocation>
        <location evidence="1">Mitochondrion inner membrane</location>
        <topology evidence="1">Multi-pass membrane protein</topology>
    </subcellularLocation>
</comment>
<comment type="similarity">
    <text evidence="5">Belongs to the cytochrome c oxidase subunit 2 family.</text>
</comment>
<name>COX2_DEBHA</name>
<sequence length="246" mass="28359">MIWTDVPTPWGMRFQDAATPNAEGMHELYDHMMYYLALMLGLVSYMLYVMMKDYKNNTFAYKYIKHGQTLEIMWTMFPAVMLLLMAFPSFMLLYLCDEVLTPAMTVKVVGLQWYWKYEYSDFVSETGETVEYESYVMPEDMLEEGQLRLLDTDTSMVVPVDTHVRFMVTANDVLHCFTMPSLGIKVDACPGRLNQVSALMQRTGVYYGQCSELCGVNHGLMPIKTECVPIGDFVEWLGEQENVYVA</sequence>
<feature type="chain" id="PRO_0000355032" description="Cytochrome c oxidase subunit 2">
    <location>
        <begin position="1"/>
        <end position="246"/>
    </location>
</feature>
<feature type="transmembrane region" description="Helical" evidence="2">
    <location>
        <begin position="31"/>
        <end position="51"/>
    </location>
</feature>
<feature type="transmembrane region" description="Helical" evidence="2">
    <location>
        <begin position="72"/>
        <end position="92"/>
    </location>
</feature>
<feature type="binding site" evidence="1">
    <location>
        <position position="175"/>
    </location>
    <ligand>
        <name>Cu cation</name>
        <dbReference type="ChEBI" id="CHEBI:23378"/>
        <label>A1</label>
    </ligand>
</feature>
<feature type="binding site" evidence="1">
    <location>
        <position position="210"/>
    </location>
    <ligand>
        <name>Cu cation</name>
        <dbReference type="ChEBI" id="CHEBI:23378"/>
        <label>A1</label>
    </ligand>
</feature>
<feature type="binding site" evidence="1">
    <location>
        <position position="210"/>
    </location>
    <ligand>
        <name>Cu cation</name>
        <dbReference type="ChEBI" id="CHEBI:23378"/>
        <label>A2</label>
    </ligand>
</feature>
<feature type="binding site" evidence="1">
    <location>
        <position position="212"/>
    </location>
    <ligand>
        <name>Cu cation</name>
        <dbReference type="ChEBI" id="CHEBI:23378"/>
        <label>A2</label>
    </ligand>
</feature>
<feature type="binding site" evidence="1">
    <location>
        <position position="212"/>
    </location>
    <ligand>
        <name>Mg(2+)</name>
        <dbReference type="ChEBI" id="CHEBI:18420"/>
        <note>ligand shared with subunit 1</note>
    </ligand>
</feature>
<feature type="binding site" evidence="1">
    <location>
        <position position="214"/>
    </location>
    <ligand>
        <name>Cu cation</name>
        <dbReference type="ChEBI" id="CHEBI:23378"/>
        <label>A1</label>
    </ligand>
</feature>
<feature type="binding site" evidence="1">
    <location>
        <position position="214"/>
    </location>
    <ligand>
        <name>Cu cation</name>
        <dbReference type="ChEBI" id="CHEBI:23378"/>
        <label>A2</label>
    </ligand>
</feature>
<feature type="binding site" evidence="1">
    <location>
        <position position="218"/>
    </location>
    <ligand>
        <name>Cu cation</name>
        <dbReference type="ChEBI" id="CHEBI:23378"/>
        <label>A2</label>
    </ligand>
</feature>
<feature type="binding site" evidence="1">
    <location>
        <position position="221"/>
    </location>
    <ligand>
        <name>Cu cation</name>
        <dbReference type="ChEBI" id="CHEBI:23378"/>
        <label>A1</label>
    </ligand>
</feature>
<feature type="sequence variant" description="In strain: CBS 789 and CLIB 381." evidence="3 4">
    <original>M</original>
    <variation>V</variation>
    <location>
        <position position="39"/>
    </location>
</feature>
<feature type="sequence variant" description="In strain: CLIB 660." evidence="4">
    <original>M</original>
    <variation>L</variation>
    <location>
        <position position="46"/>
    </location>
</feature>
<feature type="sequence variant" description="In strain: CBS 789 and CLIB 381." evidence="3 4">
    <original>M</original>
    <variation>I</variation>
    <location>
        <position position="51"/>
    </location>
</feature>
<feature type="sequence variant" description="In strain: CBS 789 and CLIB 381." evidence="3 4">
    <original>V</original>
    <variation>I</variation>
    <location>
        <position position="106"/>
    </location>
</feature>
<feature type="sequence variant" description="In strain: CBS 789 and CLIB 381." evidence="3 4">
    <original>M</original>
    <variation>I</variation>
    <location>
        <position position="179"/>
    </location>
</feature>
<feature type="sequence conflict" description="In Ref. 2; ABU80664/ABU80663 and 3; CAQ51421/CAQ51422/CAQ51423/CAQ51424/CAQ51428/CAQ51429." evidence="5" ref="2 3">
    <original>I</original>
    <variation>T</variation>
    <location>
        <position position="223"/>
    </location>
</feature>
<reference key="1">
    <citation type="journal article" date="2008" name="FEMS Yeast Res.">
        <title>Promiscuous DNA in the nuclear genomes of hemiascomycetous yeasts.</title>
        <authorList>
            <person name="Sacerdot C."/>
            <person name="Casaregola S."/>
            <person name="Lafontaine I."/>
            <person name="Tekaia F."/>
            <person name="Dujon B."/>
            <person name="Ozier-Kalogeropoulos O."/>
        </authorList>
    </citation>
    <scope>NUCLEOTIDE SEQUENCE [LARGE SCALE GENOMIC DNA]</scope>
    <source>
        <strain>ATCC 36239 / CBS 767 / BCRC 21394 / JCM 1990 / NBRC 0083 / IGC 2968</strain>
    </source>
</reference>
<reference key="2">
    <citation type="journal article" date="2008" name="FEMS Yeast Res.">
        <title>Re-examining the phylogeny of clinically relevant Candida species and allied genera based on multigene analyses.</title>
        <authorList>
            <person name="Tsui C.K.M."/>
            <person name="Daniel H.-M."/>
            <person name="Robert V."/>
            <person name="Meyer W."/>
        </authorList>
    </citation>
    <scope>NUCLEOTIDE SEQUENCE [GENOMIC DNA] OF 29-246</scope>
    <scope>VARIANTS VAL-39; ILE-51; ILE-106 AND ILE-179</scope>
    <source>
        <strain>ATCC 20278 / CBS 789 / IFO 0015 / JCM 2104 / WM 66</strain>
        <strain>ATCC 36239 / CBS 767 / BCRC 21394 / JCM 1990 / NBRC 0083 / IGC 2968</strain>
    </source>
</reference>
<reference key="3">
    <citation type="submission" date="2008-04" db="EMBL/GenBank/DDBJ databases">
        <title>Differentiation of Candida famata and Debaryomyces hansenii by rDNA intergenic spacer fingerprinting and revaluation of phylogenetic relationships between D.hansenii, C.famata, D.fabryi and C.flareri. Description of D.vietnamensis sp. nov.</title>
        <authorList>
            <person name="Nguyen H.V."/>
            <person name="Gaillardin C."/>
            <person name="Neuveglise C."/>
        </authorList>
    </citation>
    <scope>NUCLEOTIDE SEQUENCE [GENOMIC DNA] OF 29-223</scope>
    <scope>VARIANTS VAL-39; LEU-46; ILE-51; ILE-106 AND ILE-179</scope>
    <source>
        <strain>ATCC 20278 / CBS 789 / IFO 0015 / JCM 2104 / WM 66</strain>
        <strain>CBS 1961</strain>
        <strain>CBS 766</strain>
        <strain>CLIB 381</strain>
        <strain>CLIB 660</strain>
        <strain>Kam473</strain>
    </source>
</reference>
<reference key="4">
    <citation type="submission" date="1995-06" db="EMBL/GenBank/DDBJ databases">
        <title>Amplification and sequencing of cytochrome c oxidase subunit II gene for phylogenetic analysis of yeast mitochondria.</title>
        <authorList>
            <person name="Nakagawa Y."/>
        </authorList>
    </citation>
    <scope>NUCLEOTIDE SEQUENCE [GENOMIC DNA] OF 35-189</scope>
    <source>
        <strain>ATCC 36239 / CBS 767 / BCRC 21394 / JCM 1990 / NBRC 0083 / IGC 2968</strain>
    </source>
</reference>
<gene>
    <name type="primary">COX2</name>
</gene>
<accession>A9RAG1</accession>
<accession>B0LCE8</accession>
<accession>B0LCE9</accession>
<accession>B4F4K1</accession>
<accession>B4F4K2</accession>
<accession>B4F4K4</accession>
<accession>B4F4K8</accession>
<accession>Q34322</accession>
<proteinExistence type="inferred from homology"/>
<keyword id="KW-0186">Copper</keyword>
<keyword id="KW-0249">Electron transport</keyword>
<keyword id="KW-0460">Magnesium</keyword>
<keyword id="KW-0472">Membrane</keyword>
<keyword id="KW-0479">Metal-binding</keyword>
<keyword id="KW-0496">Mitochondrion</keyword>
<keyword id="KW-0999">Mitochondrion inner membrane</keyword>
<keyword id="KW-1185">Reference proteome</keyword>
<keyword id="KW-0679">Respiratory chain</keyword>
<keyword id="KW-1278">Translocase</keyword>
<keyword id="KW-0812">Transmembrane</keyword>
<keyword id="KW-1133">Transmembrane helix</keyword>
<keyword id="KW-0813">Transport</keyword>
<evidence type="ECO:0000250" key="1">
    <source>
        <dbReference type="UniProtKB" id="P00410"/>
    </source>
</evidence>
<evidence type="ECO:0000255" key="2"/>
<evidence type="ECO:0000269" key="3">
    <source>
    </source>
</evidence>
<evidence type="ECO:0000269" key="4">
    <source ref="3"/>
</evidence>
<evidence type="ECO:0000305" key="5"/>
<protein>
    <recommendedName>
        <fullName>Cytochrome c oxidase subunit 2</fullName>
        <ecNumber>7.1.1.9</ecNumber>
    </recommendedName>
    <alternativeName>
        <fullName>Cytochrome c oxidase polypeptide II</fullName>
    </alternativeName>
</protein>
<geneLocation type="mitochondrion"/>
<dbReference type="EC" id="7.1.1.9"/>
<dbReference type="EMBL" id="DQ508940">
    <property type="protein sequence ID" value="ABF58062.1"/>
    <property type="molecule type" value="Genomic_DNA"/>
</dbReference>
<dbReference type="EMBL" id="EF599377">
    <property type="protein sequence ID" value="ABU80663.1"/>
    <property type="molecule type" value="Genomic_DNA"/>
</dbReference>
<dbReference type="EMBL" id="EF599378">
    <property type="protein sequence ID" value="ABU80664.1"/>
    <property type="molecule type" value="Genomic_DNA"/>
</dbReference>
<dbReference type="EMBL" id="AM991984">
    <property type="protein sequence ID" value="CAQ51421.1"/>
    <property type="molecule type" value="Genomic_DNA"/>
</dbReference>
<dbReference type="EMBL" id="AM991986">
    <property type="protein sequence ID" value="CAQ51423.1"/>
    <property type="molecule type" value="Genomic_DNA"/>
</dbReference>
<dbReference type="EMBL" id="AM991987">
    <property type="protein sequence ID" value="CAQ51424.1"/>
    <property type="molecule type" value="Genomic_DNA"/>
</dbReference>
<dbReference type="EMBL" id="AM991985">
    <property type="protein sequence ID" value="CAQ51422.1"/>
    <property type="molecule type" value="Genomic_DNA"/>
</dbReference>
<dbReference type="EMBL" id="AM991991">
    <property type="protein sequence ID" value="CAQ51428.1"/>
    <property type="molecule type" value="Genomic_DNA"/>
</dbReference>
<dbReference type="EMBL" id="AM991992">
    <property type="protein sequence ID" value="CAQ51429.1"/>
    <property type="molecule type" value="Genomic_DNA"/>
</dbReference>
<dbReference type="EMBL" id="D55727">
    <property type="protein sequence ID" value="BAA09541.1"/>
    <property type="molecule type" value="Genomic_DNA"/>
</dbReference>
<dbReference type="RefSeq" id="YP_001621413.1">
    <property type="nucleotide sequence ID" value="NC_010166.1"/>
</dbReference>
<dbReference type="SMR" id="A9RAG1"/>
<dbReference type="FunCoup" id="A9RAG1">
    <property type="interactions" value="243"/>
</dbReference>
<dbReference type="STRING" id="284592.A9RAG1"/>
<dbReference type="GeneID" id="5845854"/>
<dbReference type="KEGG" id="dha:cox2"/>
<dbReference type="InParanoid" id="A9RAG1"/>
<dbReference type="Proteomes" id="UP000000599">
    <property type="component" value="Mitochondrion"/>
</dbReference>
<dbReference type="GO" id="GO:0005743">
    <property type="term" value="C:mitochondrial inner membrane"/>
    <property type="evidence" value="ECO:0007669"/>
    <property type="project" value="UniProtKB-SubCell"/>
</dbReference>
<dbReference type="GO" id="GO:0005507">
    <property type="term" value="F:copper ion binding"/>
    <property type="evidence" value="ECO:0007669"/>
    <property type="project" value="InterPro"/>
</dbReference>
<dbReference type="GO" id="GO:0004129">
    <property type="term" value="F:cytochrome-c oxidase activity"/>
    <property type="evidence" value="ECO:0007669"/>
    <property type="project" value="UniProtKB-EC"/>
</dbReference>
<dbReference type="GO" id="GO:0042773">
    <property type="term" value="P:ATP synthesis coupled electron transport"/>
    <property type="evidence" value="ECO:0007669"/>
    <property type="project" value="TreeGrafter"/>
</dbReference>
<dbReference type="CDD" id="cd13912">
    <property type="entry name" value="CcO_II_C"/>
    <property type="match status" value="1"/>
</dbReference>
<dbReference type="FunFam" id="2.60.40.420:FF:000001">
    <property type="entry name" value="Cytochrome c oxidase subunit 2"/>
    <property type="match status" value="1"/>
</dbReference>
<dbReference type="Gene3D" id="1.10.287.90">
    <property type="match status" value="1"/>
</dbReference>
<dbReference type="Gene3D" id="2.60.40.420">
    <property type="entry name" value="Cupredoxins - blue copper proteins"/>
    <property type="match status" value="1"/>
</dbReference>
<dbReference type="InterPro" id="IPR045187">
    <property type="entry name" value="CcO_II"/>
</dbReference>
<dbReference type="InterPro" id="IPR002429">
    <property type="entry name" value="CcO_II-like_C"/>
</dbReference>
<dbReference type="InterPro" id="IPR034210">
    <property type="entry name" value="CcO_II_C"/>
</dbReference>
<dbReference type="InterPro" id="IPR001505">
    <property type="entry name" value="Copper_CuA"/>
</dbReference>
<dbReference type="InterPro" id="IPR008972">
    <property type="entry name" value="Cupredoxin"/>
</dbReference>
<dbReference type="InterPro" id="IPR014222">
    <property type="entry name" value="Cyt_c_oxidase_su2"/>
</dbReference>
<dbReference type="InterPro" id="IPR011759">
    <property type="entry name" value="Cyt_c_oxidase_su2_TM_dom"/>
</dbReference>
<dbReference type="InterPro" id="IPR036257">
    <property type="entry name" value="Cyt_c_oxidase_su2_TM_sf"/>
</dbReference>
<dbReference type="NCBIfam" id="TIGR02866">
    <property type="entry name" value="CoxB"/>
    <property type="match status" value="1"/>
</dbReference>
<dbReference type="PANTHER" id="PTHR22888:SF9">
    <property type="entry name" value="CYTOCHROME C OXIDASE SUBUNIT 2"/>
    <property type="match status" value="1"/>
</dbReference>
<dbReference type="PANTHER" id="PTHR22888">
    <property type="entry name" value="CYTOCHROME C OXIDASE, SUBUNIT II"/>
    <property type="match status" value="1"/>
</dbReference>
<dbReference type="Pfam" id="PF00116">
    <property type="entry name" value="COX2"/>
    <property type="match status" value="1"/>
</dbReference>
<dbReference type="Pfam" id="PF02790">
    <property type="entry name" value="COX2_TM"/>
    <property type="match status" value="1"/>
</dbReference>
<dbReference type="PRINTS" id="PR01166">
    <property type="entry name" value="CYCOXIDASEII"/>
</dbReference>
<dbReference type="SUPFAM" id="SSF49503">
    <property type="entry name" value="Cupredoxins"/>
    <property type="match status" value="1"/>
</dbReference>
<dbReference type="SUPFAM" id="SSF81464">
    <property type="entry name" value="Cytochrome c oxidase subunit II-like, transmembrane region"/>
    <property type="match status" value="1"/>
</dbReference>
<dbReference type="PROSITE" id="PS00078">
    <property type="entry name" value="COX2"/>
    <property type="match status" value="1"/>
</dbReference>
<dbReference type="PROSITE" id="PS50857">
    <property type="entry name" value="COX2_CUA"/>
    <property type="match status" value="1"/>
</dbReference>
<dbReference type="PROSITE" id="PS50999">
    <property type="entry name" value="COX2_TM"/>
    <property type="match status" value="1"/>
</dbReference>